<accession>P63113</accession>
<accession>P02158</accession>
<sequence length="154" mass="17337">MGLSDGEWQIVLNIWGKVETDLAGHGQEVLIRLFKNHPETLDKFDKFKHLKTEDEMKGSEDLKKHGNTVLTALGGILKKKGHHEAELKPLAQSHATKHKIPVKYLEFISDAIIQVLQSKHSGDFHADTEAAMKKALELFRNDIAAKYKELGFQG</sequence>
<proteinExistence type="evidence at protein level"/>
<name>MYG_CANLF</name>
<protein>
    <recommendedName>
        <fullName>Myoglobin</fullName>
    </recommendedName>
    <alternativeName>
        <fullName evidence="1">Nitrite reductase MB</fullName>
        <ecNumber evidence="1">1.7.-.-</ecNumber>
    </alternativeName>
    <alternativeName>
        <fullName evidence="1">Pseudoperoxidase MB</fullName>
        <ecNumber evidence="1">1.11.1.-</ecNumber>
    </alternativeName>
</protein>
<comment type="function">
    <text evidence="1">Monomeric heme protein which primary function is to store oxygen and facilitate its diffusion within muscle tissues. Reversibly binds oxygen through a pentacoordinated heme iron and enables its timely and efficient release as needed during periods of heightened demand. Depending on the oxidative conditions of tissues and cells, and in addition to its ability to bind oxygen, it also has a nitrite reductase activity whereby it regulates the production of bioactive nitric oxide. Under stress conditions, like hypoxia and anoxia, it also protects cells against reactive oxygen species thanks to its pseudoperoxidase activity.</text>
</comment>
<comment type="catalytic activity">
    <reaction evidence="1">
        <text>Fe(III)-heme b-[protein] + nitric oxide + H2O = Fe(II)-heme b-[protein] + nitrite + 2 H(+)</text>
        <dbReference type="Rhea" id="RHEA:77711"/>
        <dbReference type="Rhea" id="RHEA-COMP:18975"/>
        <dbReference type="Rhea" id="RHEA-COMP:18976"/>
        <dbReference type="ChEBI" id="CHEBI:15377"/>
        <dbReference type="ChEBI" id="CHEBI:15378"/>
        <dbReference type="ChEBI" id="CHEBI:16301"/>
        <dbReference type="ChEBI" id="CHEBI:16480"/>
        <dbReference type="ChEBI" id="CHEBI:55376"/>
        <dbReference type="ChEBI" id="CHEBI:60344"/>
    </reaction>
    <physiologicalReaction direction="right-to-left" evidence="1">
        <dbReference type="Rhea" id="RHEA:77713"/>
    </physiologicalReaction>
</comment>
<comment type="catalytic activity">
    <reaction evidence="1">
        <text>H2O2 + AH2 = A + 2 H2O</text>
        <dbReference type="Rhea" id="RHEA:30275"/>
        <dbReference type="ChEBI" id="CHEBI:13193"/>
        <dbReference type="ChEBI" id="CHEBI:15377"/>
        <dbReference type="ChEBI" id="CHEBI:16240"/>
        <dbReference type="ChEBI" id="CHEBI:17499"/>
    </reaction>
</comment>
<comment type="subunit">
    <text evidence="2">Monomeric.</text>
</comment>
<comment type="subcellular location">
    <subcellularLocation>
        <location evidence="1">Cytoplasm</location>
        <location evidence="1">Sarcoplasm</location>
    </subcellularLocation>
</comment>
<comment type="similarity">
    <text evidence="7">Belongs to the globin family.</text>
</comment>
<gene>
    <name type="primary">MB</name>
</gene>
<dbReference type="EC" id="1.7.-.-" evidence="1"/>
<dbReference type="EC" id="1.11.1.-" evidence="1"/>
<dbReference type="PIR" id="A90606">
    <property type="entry name" value="MYDG"/>
</dbReference>
<dbReference type="SMR" id="P63113"/>
<dbReference type="FunCoup" id="P63113">
    <property type="interactions" value="22"/>
</dbReference>
<dbReference type="STRING" id="9615.ENSCAFP00000044151"/>
<dbReference type="PaxDb" id="9612-ENSCAFP00000002477"/>
<dbReference type="eggNOG" id="KOG3378">
    <property type="taxonomic scope" value="Eukaryota"/>
</dbReference>
<dbReference type="InParanoid" id="P63113"/>
<dbReference type="OrthoDB" id="6344802at2759"/>
<dbReference type="Proteomes" id="UP000002254">
    <property type="component" value="Unplaced"/>
</dbReference>
<dbReference type="Proteomes" id="UP000694429">
    <property type="component" value="Unplaced"/>
</dbReference>
<dbReference type="Proteomes" id="UP000694542">
    <property type="component" value="Unplaced"/>
</dbReference>
<dbReference type="Proteomes" id="UP000805418">
    <property type="component" value="Unplaced"/>
</dbReference>
<dbReference type="GO" id="GO:0016528">
    <property type="term" value="C:sarcoplasm"/>
    <property type="evidence" value="ECO:0000250"/>
    <property type="project" value="UniProtKB"/>
</dbReference>
<dbReference type="GO" id="GO:0020037">
    <property type="term" value="F:heme binding"/>
    <property type="evidence" value="ECO:0007669"/>
    <property type="project" value="InterPro"/>
</dbReference>
<dbReference type="GO" id="GO:0046872">
    <property type="term" value="F:metal ion binding"/>
    <property type="evidence" value="ECO:0007669"/>
    <property type="project" value="UniProtKB-KW"/>
</dbReference>
<dbReference type="GO" id="GO:0098809">
    <property type="term" value="F:nitrite reductase activity"/>
    <property type="evidence" value="ECO:0000250"/>
    <property type="project" value="UniProtKB"/>
</dbReference>
<dbReference type="GO" id="GO:0019825">
    <property type="term" value="F:oxygen binding"/>
    <property type="evidence" value="ECO:0000318"/>
    <property type="project" value="GO_Central"/>
</dbReference>
<dbReference type="GO" id="GO:0005344">
    <property type="term" value="F:oxygen carrier activity"/>
    <property type="evidence" value="ECO:0000250"/>
    <property type="project" value="UniProtKB"/>
</dbReference>
<dbReference type="GO" id="GO:0004601">
    <property type="term" value="F:peroxidase activity"/>
    <property type="evidence" value="ECO:0000250"/>
    <property type="project" value="UniProtKB"/>
</dbReference>
<dbReference type="GO" id="GO:0015671">
    <property type="term" value="P:oxygen transport"/>
    <property type="evidence" value="ECO:0000318"/>
    <property type="project" value="GO_Central"/>
</dbReference>
<dbReference type="GO" id="GO:0019430">
    <property type="term" value="P:removal of superoxide radicals"/>
    <property type="evidence" value="ECO:0000250"/>
    <property type="project" value="UniProtKB"/>
</dbReference>
<dbReference type="Gene3D" id="6.10.140.2100">
    <property type="match status" value="1"/>
</dbReference>
<dbReference type="Gene3D" id="6.10.140.2110">
    <property type="match status" value="1"/>
</dbReference>
<dbReference type="InterPro" id="IPR000971">
    <property type="entry name" value="Globin"/>
</dbReference>
<dbReference type="InterPro" id="IPR009050">
    <property type="entry name" value="Globin-like_sf"/>
</dbReference>
<dbReference type="InterPro" id="IPR002335">
    <property type="entry name" value="Myoglobin"/>
</dbReference>
<dbReference type="PANTHER" id="PTHR47132">
    <property type="entry name" value="MYOGLOBIN"/>
    <property type="match status" value="1"/>
</dbReference>
<dbReference type="PANTHER" id="PTHR47132:SF1">
    <property type="entry name" value="MYOGLOBIN"/>
    <property type="match status" value="1"/>
</dbReference>
<dbReference type="Pfam" id="PF00042">
    <property type="entry name" value="Globin"/>
    <property type="match status" value="1"/>
</dbReference>
<dbReference type="PRINTS" id="PR00613">
    <property type="entry name" value="MYOGLOBIN"/>
</dbReference>
<dbReference type="SUPFAM" id="SSF46458">
    <property type="entry name" value="Globin-like"/>
    <property type="match status" value="1"/>
</dbReference>
<dbReference type="PROSITE" id="PS01033">
    <property type="entry name" value="GLOBIN"/>
    <property type="match status" value="1"/>
</dbReference>
<feature type="initiator methionine" description="Removed" evidence="8">
    <location>
        <position position="1"/>
    </location>
</feature>
<feature type="chain" id="PRO_0000053282" description="Myoglobin">
    <location>
        <begin position="2"/>
        <end position="154"/>
    </location>
</feature>
<feature type="domain" description="Globin" evidence="7">
    <location>
        <begin position="2"/>
        <end position="148"/>
    </location>
</feature>
<feature type="binding site" evidence="5">
    <location>
        <position position="65"/>
    </location>
    <ligand>
        <name>nitrite</name>
        <dbReference type="ChEBI" id="CHEBI:16301"/>
    </ligand>
</feature>
<feature type="binding site" evidence="3 7">
    <location>
        <position position="65"/>
    </location>
    <ligand>
        <name>O2</name>
        <dbReference type="ChEBI" id="CHEBI:15379"/>
    </ligand>
</feature>
<feature type="binding site" description="proximal binding residue" evidence="1">
    <location>
        <position position="94"/>
    </location>
    <ligand>
        <name>heme b</name>
        <dbReference type="ChEBI" id="CHEBI:60344"/>
    </ligand>
    <ligandPart>
        <name>Fe</name>
        <dbReference type="ChEBI" id="CHEBI:18248"/>
    </ligandPart>
</feature>
<feature type="modified residue" description="Phosphoserine" evidence="6">
    <location>
        <position position="4"/>
    </location>
</feature>
<feature type="modified residue" description="Phosphothreonine" evidence="4">
    <location>
        <position position="68"/>
    </location>
</feature>
<organism>
    <name type="scientific">Canis lupus familiaris</name>
    <name type="common">Dog</name>
    <name type="synonym">Canis familiaris</name>
    <dbReference type="NCBI Taxonomy" id="9615"/>
    <lineage>
        <taxon>Eukaryota</taxon>
        <taxon>Metazoa</taxon>
        <taxon>Chordata</taxon>
        <taxon>Craniata</taxon>
        <taxon>Vertebrata</taxon>
        <taxon>Euteleostomi</taxon>
        <taxon>Mammalia</taxon>
        <taxon>Eutheria</taxon>
        <taxon>Laurasiatheria</taxon>
        <taxon>Carnivora</taxon>
        <taxon>Caniformia</taxon>
        <taxon>Canidae</taxon>
        <taxon>Canis</taxon>
    </lineage>
</organism>
<keyword id="KW-0963">Cytoplasm</keyword>
<keyword id="KW-0903">Direct protein sequencing</keyword>
<keyword id="KW-0349">Heme</keyword>
<keyword id="KW-0408">Iron</keyword>
<keyword id="KW-0479">Metal-binding</keyword>
<keyword id="KW-0514">Muscle protein</keyword>
<keyword id="KW-0560">Oxidoreductase</keyword>
<keyword id="KW-0561">Oxygen transport</keyword>
<keyword id="KW-0597">Phosphoprotein</keyword>
<keyword id="KW-1185">Reference proteome</keyword>
<keyword id="KW-0813">Transport</keyword>
<reference key="1">
    <citation type="journal article" date="1976" name="Biochim. Biophys. Acta">
        <title>The covalent structure of dog myoglobin.</title>
        <authorList>
            <person name="Dumur V."/>
            <person name="Dautrevaux M."/>
            <person name="Han K."/>
        </authorList>
    </citation>
    <scope>PROTEIN SEQUENCE OF 2-154</scope>
</reference>
<reference key="2">
    <citation type="journal article" date="1976" name="Biochim. Biophys. Acta">
        <authorList>
            <person name="Dumur V."/>
            <person name="Dautrevaux M."/>
            <person name="Han K."/>
        </authorList>
    </citation>
    <scope>ERRATUM OF PUBMED:1252463</scope>
    <scope>SEQUENCE REVISION</scope>
</reference>
<evidence type="ECO:0000250" key="1">
    <source>
        <dbReference type="UniProtKB" id="P02144"/>
    </source>
</evidence>
<evidence type="ECO:0000250" key="2">
    <source>
        <dbReference type="UniProtKB" id="P02185"/>
    </source>
</evidence>
<evidence type="ECO:0000250" key="3">
    <source>
        <dbReference type="UniProtKB" id="P02189"/>
    </source>
</evidence>
<evidence type="ECO:0000250" key="4">
    <source>
        <dbReference type="UniProtKB" id="P04247"/>
    </source>
</evidence>
<evidence type="ECO:0000250" key="5">
    <source>
        <dbReference type="UniProtKB" id="P68082"/>
    </source>
</evidence>
<evidence type="ECO:0000250" key="6">
    <source>
        <dbReference type="UniProtKB" id="Q9QZ76"/>
    </source>
</evidence>
<evidence type="ECO:0000255" key="7">
    <source>
        <dbReference type="PROSITE-ProRule" id="PRU00238"/>
    </source>
</evidence>
<evidence type="ECO:0000269" key="8">
    <source>
    </source>
</evidence>